<reference key="1">
    <citation type="journal article" date="2003" name="DNA Res.">
        <title>Prediction of the coding sequences of mouse homologues of KIAA gene: II. The complete nucleotide sequences of 400 mouse KIAA-homologous cDNAs identified by screening of terminal sequences of cDNA clones randomly sampled from size-fractionated libraries.</title>
        <authorList>
            <person name="Okazaki N."/>
            <person name="Kikuno R."/>
            <person name="Ohara R."/>
            <person name="Inamoto S."/>
            <person name="Aizawa H."/>
            <person name="Yuasa S."/>
            <person name="Nakajima D."/>
            <person name="Nagase T."/>
            <person name="Ohara O."/>
            <person name="Koga H."/>
        </authorList>
    </citation>
    <scope>NUCLEOTIDE SEQUENCE [LARGE SCALE MRNA]</scope>
    <source>
        <tissue>Brain</tissue>
    </source>
</reference>
<reference key="2">
    <citation type="journal article" date="2005" name="Science">
        <title>The transcriptional landscape of the mammalian genome.</title>
        <authorList>
            <person name="Carninci P."/>
            <person name="Kasukawa T."/>
            <person name="Katayama S."/>
            <person name="Gough J."/>
            <person name="Frith M.C."/>
            <person name="Maeda N."/>
            <person name="Oyama R."/>
            <person name="Ravasi T."/>
            <person name="Lenhard B."/>
            <person name="Wells C."/>
            <person name="Kodzius R."/>
            <person name="Shimokawa K."/>
            <person name="Bajic V.B."/>
            <person name="Brenner S.E."/>
            <person name="Batalov S."/>
            <person name="Forrest A.R."/>
            <person name="Zavolan M."/>
            <person name="Davis M.J."/>
            <person name="Wilming L.G."/>
            <person name="Aidinis V."/>
            <person name="Allen J.E."/>
            <person name="Ambesi-Impiombato A."/>
            <person name="Apweiler R."/>
            <person name="Aturaliya R.N."/>
            <person name="Bailey T.L."/>
            <person name="Bansal M."/>
            <person name="Baxter L."/>
            <person name="Beisel K.W."/>
            <person name="Bersano T."/>
            <person name="Bono H."/>
            <person name="Chalk A.M."/>
            <person name="Chiu K.P."/>
            <person name="Choudhary V."/>
            <person name="Christoffels A."/>
            <person name="Clutterbuck D.R."/>
            <person name="Crowe M.L."/>
            <person name="Dalla E."/>
            <person name="Dalrymple B.P."/>
            <person name="de Bono B."/>
            <person name="Della Gatta G."/>
            <person name="di Bernardo D."/>
            <person name="Down T."/>
            <person name="Engstrom P."/>
            <person name="Fagiolini M."/>
            <person name="Faulkner G."/>
            <person name="Fletcher C.F."/>
            <person name="Fukushima T."/>
            <person name="Furuno M."/>
            <person name="Futaki S."/>
            <person name="Gariboldi M."/>
            <person name="Georgii-Hemming P."/>
            <person name="Gingeras T.R."/>
            <person name="Gojobori T."/>
            <person name="Green R.E."/>
            <person name="Gustincich S."/>
            <person name="Harbers M."/>
            <person name="Hayashi Y."/>
            <person name="Hensch T.K."/>
            <person name="Hirokawa N."/>
            <person name="Hill D."/>
            <person name="Huminiecki L."/>
            <person name="Iacono M."/>
            <person name="Ikeo K."/>
            <person name="Iwama A."/>
            <person name="Ishikawa T."/>
            <person name="Jakt M."/>
            <person name="Kanapin A."/>
            <person name="Katoh M."/>
            <person name="Kawasawa Y."/>
            <person name="Kelso J."/>
            <person name="Kitamura H."/>
            <person name="Kitano H."/>
            <person name="Kollias G."/>
            <person name="Krishnan S.P."/>
            <person name="Kruger A."/>
            <person name="Kummerfeld S.K."/>
            <person name="Kurochkin I.V."/>
            <person name="Lareau L.F."/>
            <person name="Lazarevic D."/>
            <person name="Lipovich L."/>
            <person name="Liu J."/>
            <person name="Liuni S."/>
            <person name="McWilliam S."/>
            <person name="Madan Babu M."/>
            <person name="Madera M."/>
            <person name="Marchionni L."/>
            <person name="Matsuda H."/>
            <person name="Matsuzawa S."/>
            <person name="Miki H."/>
            <person name="Mignone F."/>
            <person name="Miyake S."/>
            <person name="Morris K."/>
            <person name="Mottagui-Tabar S."/>
            <person name="Mulder N."/>
            <person name="Nakano N."/>
            <person name="Nakauchi H."/>
            <person name="Ng P."/>
            <person name="Nilsson R."/>
            <person name="Nishiguchi S."/>
            <person name="Nishikawa S."/>
            <person name="Nori F."/>
            <person name="Ohara O."/>
            <person name="Okazaki Y."/>
            <person name="Orlando V."/>
            <person name="Pang K.C."/>
            <person name="Pavan W.J."/>
            <person name="Pavesi G."/>
            <person name="Pesole G."/>
            <person name="Petrovsky N."/>
            <person name="Piazza S."/>
            <person name="Reed J."/>
            <person name="Reid J.F."/>
            <person name="Ring B.Z."/>
            <person name="Ringwald M."/>
            <person name="Rost B."/>
            <person name="Ruan Y."/>
            <person name="Salzberg S.L."/>
            <person name="Sandelin A."/>
            <person name="Schneider C."/>
            <person name="Schoenbach C."/>
            <person name="Sekiguchi K."/>
            <person name="Semple C.A."/>
            <person name="Seno S."/>
            <person name="Sessa L."/>
            <person name="Sheng Y."/>
            <person name="Shibata Y."/>
            <person name="Shimada H."/>
            <person name="Shimada K."/>
            <person name="Silva D."/>
            <person name="Sinclair B."/>
            <person name="Sperling S."/>
            <person name="Stupka E."/>
            <person name="Sugiura K."/>
            <person name="Sultana R."/>
            <person name="Takenaka Y."/>
            <person name="Taki K."/>
            <person name="Tammoja K."/>
            <person name="Tan S.L."/>
            <person name="Tang S."/>
            <person name="Taylor M.S."/>
            <person name="Tegner J."/>
            <person name="Teichmann S.A."/>
            <person name="Ueda H.R."/>
            <person name="van Nimwegen E."/>
            <person name="Verardo R."/>
            <person name="Wei C.L."/>
            <person name="Yagi K."/>
            <person name="Yamanishi H."/>
            <person name="Zabarovsky E."/>
            <person name="Zhu S."/>
            <person name="Zimmer A."/>
            <person name="Hide W."/>
            <person name="Bult C."/>
            <person name="Grimmond S.M."/>
            <person name="Teasdale R.D."/>
            <person name="Liu E.T."/>
            <person name="Brusic V."/>
            <person name="Quackenbush J."/>
            <person name="Wahlestedt C."/>
            <person name="Mattick J.S."/>
            <person name="Hume D.A."/>
            <person name="Kai C."/>
            <person name="Sasaki D."/>
            <person name="Tomaru Y."/>
            <person name="Fukuda S."/>
            <person name="Kanamori-Katayama M."/>
            <person name="Suzuki M."/>
            <person name="Aoki J."/>
            <person name="Arakawa T."/>
            <person name="Iida J."/>
            <person name="Imamura K."/>
            <person name="Itoh M."/>
            <person name="Kato T."/>
            <person name="Kawaji H."/>
            <person name="Kawagashira N."/>
            <person name="Kawashima T."/>
            <person name="Kojima M."/>
            <person name="Kondo S."/>
            <person name="Konno H."/>
            <person name="Nakano K."/>
            <person name="Ninomiya N."/>
            <person name="Nishio T."/>
            <person name="Okada M."/>
            <person name="Plessy C."/>
            <person name="Shibata K."/>
            <person name="Shiraki T."/>
            <person name="Suzuki S."/>
            <person name="Tagami M."/>
            <person name="Waki K."/>
            <person name="Watahiki A."/>
            <person name="Okamura-Oho Y."/>
            <person name="Suzuki H."/>
            <person name="Kawai J."/>
            <person name="Hayashizaki Y."/>
        </authorList>
    </citation>
    <scope>NUCLEOTIDE SEQUENCE [LARGE SCALE MRNA]</scope>
    <source>
        <strain>C57BL/6J</strain>
        <tissue>Corpora quadrigemina</tissue>
        <tissue>Testis</tissue>
    </source>
</reference>
<reference key="3">
    <citation type="journal article" date="2004" name="Genome Res.">
        <title>The status, quality, and expansion of the NIH full-length cDNA project: the Mammalian Gene Collection (MGC).</title>
        <authorList>
            <consortium name="The MGC Project Team"/>
        </authorList>
    </citation>
    <scope>NUCLEOTIDE SEQUENCE [LARGE SCALE MRNA]</scope>
    <source>
        <strain>FVB/N</strain>
        <tissue>Brain</tissue>
        <tissue>Mammary gland</tissue>
    </source>
</reference>
<reference key="4">
    <citation type="journal article" date="2010" name="Cell">
        <title>A tissue-specific atlas of mouse protein phosphorylation and expression.</title>
        <authorList>
            <person name="Huttlin E.L."/>
            <person name="Jedrychowski M.P."/>
            <person name="Elias J.E."/>
            <person name="Goswami T."/>
            <person name="Rad R."/>
            <person name="Beausoleil S.A."/>
            <person name="Villen J."/>
            <person name="Haas W."/>
            <person name="Sowa M.E."/>
            <person name="Gygi S.P."/>
        </authorList>
    </citation>
    <scope>IDENTIFICATION BY MASS SPECTROMETRY [LARGE SCALE ANALYSIS]</scope>
    <source>
        <tissue>Brain</tissue>
        <tissue>Brown adipose tissue</tissue>
        <tissue>Heart</tissue>
        <tissue>Kidney</tissue>
        <tissue>Liver</tissue>
        <tissue>Lung</tissue>
        <tissue>Pancreas</tissue>
        <tissue>Spleen</tissue>
        <tissue>Testis</tissue>
    </source>
</reference>
<reference key="5">
    <citation type="journal article" date="2010" name="Immunity">
        <title>The ubiquitin E3 ligase RAUL negatively regulates type i interferon through ubiquitination of the transcription factors IRF7 and IRF3.</title>
        <authorList>
            <person name="Yu Y."/>
            <person name="Hayward G.S."/>
        </authorList>
    </citation>
    <scope>FUNCTION</scope>
</reference>
<comment type="function">
    <text evidence="1 5">E3 ubiquitin-protein ligase that specifically catalyzes 'Lys-29'- and 'Lys-48'-linked polyubiquitin chains (By similarity). Accepts ubiquitin from the E2 ubiquitin-conjugating enzyme UBE2D1 in the form of a thioester and then directly transfers the ubiquitin to targeted substrates (By similarity). Associates with the proteasome and promotes elongation of ubiquitin chains on substrates bound to the 26S proteasome (By similarity). Also catalyzes 'Lys-29'- and 'Lys-48'-linked ubiquitination of 26S proteasome subunit ADRM1/RPN13 in response to proteotoxic stress, impairing the ability of the proteasome to bind and degrade ubiquitin-conjugated proteins (By similarity). Acts as a negative regulator of autophagy by mediating 'Lys-29'- and 'Lys-48'-linked ubiquitination of PIK3C3/VPS34, promoting its degradation (By similarity). Can assemble unanchored poly-ubiquitin chains in either 'Lys-29'- or 'Lys-48'-linked polyubiquitin chains; with some preference for 'Lys-48' linkages (By similarity). Acts as a negative regulator of type I interferon by mediating 'Lys-48'-linked ubiquitination of IRF3 and IRF7, leading to their degradation by the proteasome (PubMed:21167755). Catalyzes ubiquitination and degradation of CAND2 (By similarity).</text>
</comment>
<comment type="catalytic activity">
    <reaction evidence="1">
        <text>S-ubiquitinyl-[E2 ubiquitin-conjugating enzyme]-L-cysteine + [acceptor protein]-L-lysine = [E2 ubiquitin-conjugating enzyme]-L-cysteine + N(6)-ubiquitinyl-[acceptor protein]-L-lysine.</text>
        <dbReference type="EC" id="2.3.2.26"/>
    </reaction>
</comment>
<comment type="pathway">
    <text evidence="1">Protein modification; protein ubiquitination.</text>
</comment>
<comment type="subunit">
    <text evidence="1">Interacts with 26S proteasomes. Interacts (via the HECT domain) with UBE2D1 and, less efficiently, with UBE2L3.</text>
</comment>
<comment type="PTM">
    <text evidence="1">Autoubiquitinated; promoting its own degradation.</text>
</comment>
<comment type="similarity">
    <text evidence="8">Belongs to the UBE3C family.</text>
</comment>
<comment type="sequence caution" evidence="8">
    <conflict type="erroneous initiation">
        <sequence resource="EMBL-CDS" id="AAH21525"/>
    </conflict>
</comment>
<sequence length="1083" mass="123976">MFSFEGDFKTRPKVSLGGASRKEEKASLLHRTQEERRKREEERRRLKNAVIIQSFIRGYRDRKQQYFIQRSAFDQCTDSAQPGGTFCLADGPNLTLLVRQLLFFYKQSEDSKRLIWLYQNLIKHSSLFVKQLDGSERLTCLFQIKRLMSLCCRLLQNCSDDSLNVALPMRMLEVFTSENTYLPVLQDSSYVVSVIEQILHYMVHSGYYRSLYLLINSKLPSSIEYSDLSRVPIAKILLENVLKPLHFTYSSCPEASRHQVFSAFTEEFLGAPFTDQIFHFVIPAFADAQTVFPYEPFLNALLLLESQSSKRCSGVPWLFYFVLTVGENYLGALSEDGLLVYLRVLQTFLSQLPASPTGTGCPDSTSDSEDDNEETDQPNSPEDGRVSAPYITEECLRKLDTKQQTNTLLNLVWRDSASEEVFTRMASICHTLMVQHRMMVPKVRLLYSLAFNARFLRHLWFLISSMTTQMITGSMVPLLQLISRGSPMSFEDSSRIIPLFYLFSSLFSHSLISIHDNEFFGDPIEVVGQRQSSMMPFTLEELILLSRCLRDACLGIIKLAYPETKPEVREEYVTAFQSIGVTTNSEMQQCIQMEQKRWVQLFKVITNLVKMLKSRDTRRNFCPPNHWLSEQEDIKADKVTQLYVPASRHVWRFRRMGRIGPLQSTLEVGLESLPLSVSEERQLAILTELPFVVPFEERVKIFQRLIYADKQEVQGDGPFLDGINVTIRRNYIYEDAYDKLSPENEPDLKKRIRVHLLNAHGLDEAGIDGGGIFREFLNELLKSGFNPNQGFFKTTNEGLLYPNPAAQMLVGDSFARHYYFLGRMLGKALYENMLVELPFAGFFLSKLLGTSADVDIHHLASLDPEVYRNLLFLKSYEEDVEELGLNFTVVNNDLGEAQVVELKFGGKDIPVTGANRIAYIHLVADYRLNKQIRPHCLAFRQGLANVVSLEWLRMFDQQEIQVLISGAQVPVSLEDLKSFTNYSGGYSADHPVIKIFWRVVEGFTDEEKRKLLKFVTSCSRPPLLGFKELYPAFCIHNGGSDLERLPTASTCMNLLKLPEFYDEALLRSKLLYAIECAAGFELS</sequence>
<protein>
    <recommendedName>
        <fullName evidence="8">Ubiquitin-protein ligase E3C</fullName>
        <ecNumber evidence="1">2.3.2.26</ecNumber>
    </recommendedName>
    <alternativeName>
        <fullName evidence="8">HECT-type ubiquitin transferase E3C</fullName>
    </alternativeName>
    <alternativeName>
        <fullName evidence="7">RTA-associated ubiquitin ligase</fullName>
        <shortName evidence="7">RAUL</shortName>
    </alternativeName>
</protein>
<evidence type="ECO:0000250" key="1">
    <source>
        <dbReference type="UniProtKB" id="Q15386"/>
    </source>
</evidence>
<evidence type="ECO:0000255" key="2">
    <source>
        <dbReference type="PROSITE-ProRule" id="PRU00104"/>
    </source>
</evidence>
<evidence type="ECO:0000255" key="3">
    <source>
        <dbReference type="PROSITE-ProRule" id="PRU00116"/>
    </source>
</evidence>
<evidence type="ECO:0000256" key="4">
    <source>
        <dbReference type="SAM" id="MobiDB-lite"/>
    </source>
</evidence>
<evidence type="ECO:0000269" key="5">
    <source>
    </source>
</evidence>
<evidence type="ECO:0000303" key="6">
    <source>
    </source>
</evidence>
<evidence type="ECO:0000303" key="7">
    <source>
    </source>
</evidence>
<evidence type="ECO:0000305" key="8"/>
<evidence type="ECO:0000312" key="9">
    <source>
        <dbReference type="MGI" id="MGI:2140998"/>
    </source>
</evidence>
<dbReference type="EC" id="2.3.2.26" evidence="1"/>
<dbReference type="EMBL" id="AK122187">
    <property type="protein sequence ID" value="BAC65469.1"/>
    <property type="molecule type" value="mRNA"/>
</dbReference>
<dbReference type="EMBL" id="AK029973">
    <property type="protein sequence ID" value="BAC26709.1"/>
    <property type="molecule type" value="mRNA"/>
</dbReference>
<dbReference type="EMBL" id="AK046056">
    <property type="protein sequence ID" value="BAC32585.1"/>
    <property type="molecule type" value="mRNA"/>
</dbReference>
<dbReference type="EMBL" id="AK049125">
    <property type="protein sequence ID" value="BAC33557.1"/>
    <property type="molecule type" value="mRNA"/>
</dbReference>
<dbReference type="EMBL" id="BC021525">
    <property type="protein sequence ID" value="AAH21525.1"/>
    <property type="status" value="ALT_INIT"/>
    <property type="molecule type" value="mRNA"/>
</dbReference>
<dbReference type="EMBL" id="BC120731">
    <property type="protein sequence ID" value="AAI20732.1"/>
    <property type="molecule type" value="mRNA"/>
</dbReference>
<dbReference type="EMBL" id="BC137626">
    <property type="protein sequence ID" value="AAI37627.1"/>
    <property type="molecule type" value="mRNA"/>
</dbReference>
<dbReference type="CCDS" id="CCDS39042.1"/>
<dbReference type="RefSeq" id="NP_598668.1">
    <property type="nucleotide sequence ID" value="NM_133907.3"/>
</dbReference>
<dbReference type="SMR" id="Q80U95"/>
<dbReference type="BioGRID" id="221524">
    <property type="interactions" value="7"/>
</dbReference>
<dbReference type="FunCoup" id="Q80U95">
    <property type="interactions" value="4059"/>
</dbReference>
<dbReference type="IntAct" id="Q80U95">
    <property type="interactions" value="3"/>
</dbReference>
<dbReference type="MINT" id="Q80U95"/>
<dbReference type="STRING" id="10090.ENSMUSP00000045998"/>
<dbReference type="GlyGen" id="Q80U95">
    <property type="glycosylation" value="1 site, 1 O-linked glycan (1 site)"/>
</dbReference>
<dbReference type="iPTMnet" id="Q80U95"/>
<dbReference type="PhosphoSitePlus" id="Q80U95"/>
<dbReference type="SwissPalm" id="Q80U95"/>
<dbReference type="jPOST" id="Q80U95"/>
<dbReference type="PaxDb" id="10090-ENSMUSP00000045998"/>
<dbReference type="PeptideAtlas" id="Q80U95"/>
<dbReference type="ProteomicsDB" id="298447"/>
<dbReference type="Pumba" id="Q80U95"/>
<dbReference type="Antibodypedia" id="33178">
    <property type="antibodies" value="158 antibodies from 26 providers"/>
</dbReference>
<dbReference type="DNASU" id="100763"/>
<dbReference type="Ensembl" id="ENSMUST00000049453.9">
    <property type="protein sequence ID" value="ENSMUSP00000045998.5"/>
    <property type="gene ID" value="ENSMUSG00000039000.9"/>
</dbReference>
<dbReference type="GeneID" id="100763"/>
<dbReference type="KEGG" id="mmu:100763"/>
<dbReference type="UCSC" id="uc008wum.1">
    <property type="organism name" value="mouse"/>
</dbReference>
<dbReference type="AGR" id="MGI:2140998"/>
<dbReference type="CTD" id="9690"/>
<dbReference type="MGI" id="MGI:2140998">
    <property type="gene designation" value="Ube3c"/>
</dbReference>
<dbReference type="VEuPathDB" id="HostDB:ENSMUSG00000039000"/>
<dbReference type="eggNOG" id="KOG0942">
    <property type="taxonomic scope" value="Eukaryota"/>
</dbReference>
<dbReference type="GeneTree" id="ENSGT00940000156321"/>
<dbReference type="HOGENOM" id="CLU_002173_2_1_1"/>
<dbReference type="InParanoid" id="Q80U95"/>
<dbReference type="OMA" id="EKHYYFI"/>
<dbReference type="OrthoDB" id="8068875at2759"/>
<dbReference type="PhylomeDB" id="Q80U95"/>
<dbReference type="TreeFam" id="TF106144"/>
<dbReference type="Reactome" id="R-MMU-983168">
    <property type="pathway name" value="Antigen processing: Ubiquitination &amp; Proteasome degradation"/>
</dbReference>
<dbReference type="UniPathway" id="UPA00143"/>
<dbReference type="BioGRID-ORCS" id="100763">
    <property type="hits" value="2 hits in 78 CRISPR screens"/>
</dbReference>
<dbReference type="ChiTaRS" id="Ube3c">
    <property type="organism name" value="mouse"/>
</dbReference>
<dbReference type="PRO" id="PR:Q80U95"/>
<dbReference type="Proteomes" id="UP000000589">
    <property type="component" value="Chromosome 5"/>
</dbReference>
<dbReference type="RNAct" id="Q80U95">
    <property type="molecule type" value="protein"/>
</dbReference>
<dbReference type="Bgee" id="ENSMUSG00000039000">
    <property type="expression patterns" value="Expressed in spermatocyte and 272 other cell types or tissues"/>
</dbReference>
<dbReference type="ExpressionAtlas" id="Q80U95">
    <property type="expression patterns" value="baseline and differential"/>
</dbReference>
<dbReference type="GO" id="GO:0061630">
    <property type="term" value="F:ubiquitin protein ligase activity"/>
    <property type="evidence" value="ECO:0000250"/>
    <property type="project" value="UniProtKB"/>
</dbReference>
<dbReference type="GO" id="GO:0035519">
    <property type="term" value="P:protein K29-linked ubiquitination"/>
    <property type="evidence" value="ECO:0000250"/>
    <property type="project" value="UniProtKB"/>
</dbReference>
<dbReference type="GO" id="GO:0070936">
    <property type="term" value="P:protein K48-linked ubiquitination"/>
    <property type="evidence" value="ECO:0000250"/>
    <property type="project" value="UniProtKB"/>
</dbReference>
<dbReference type="CDD" id="cd00078">
    <property type="entry name" value="HECTc"/>
    <property type="match status" value="1"/>
</dbReference>
<dbReference type="FunFam" id="3.30.2160.10:FF:000002">
    <property type="entry name" value="Putative Ubiquitin-protein ligase E3C"/>
    <property type="match status" value="1"/>
</dbReference>
<dbReference type="FunFam" id="3.30.2410.10:FF:000011">
    <property type="entry name" value="Putative Ubiquitin-protein ligase E3C"/>
    <property type="match status" value="1"/>
</dbReference>
<dbReference type="FunFam" id="3.90.1750.10:FF:000014">
    <property type="entry name" value="Putative Ubiquitin-protein ligase E3C"/>
    <property type="match status" value="1"/>
</dbReference>
<dbReference type="Gene3D" id="3.30.2160.10">
    <property type="entry name" value="Hect, E3 ligase catalytic domain"/>
    <property type="match status" value="1"/>
</dbReference>
<dbReference type="Gene3D" id="3.30.2410.10">
    <property type="entry name" value="Hect, E3 ligase catalytic domain"/>
    <property type="match status" value="1"/>
</dbReference>
<dbReference type="Gene3D" id="3.90.1750.10">
    <property type="entry name" value="Hect, E3 ligase catalytic domains"/>
    <property type="match status" value="1"/>
</dbReference>
<dbReference type="InterPro" id="IPR044611">
    <property type="entry name" value="E3A/B/C-like"/>
</dbReference>
<dbReference type="InterPro" id="IPR000569">
    <property type="entry name" value="HECT_dom"/>
</dbReference>
<dbReference type="InterPro" id="IPR035983">
    <property type="entry name" value="Hect_E3_ubiquitin_ligase"/>
</dbReference>
<dbReference type="InterPro" id="IPR000048">
    <property type="entry name" value="IQ_motif_EF-hand-BS"/>
</dbReference>
<dbReference type="PANTHER" id="PTHR45700">
    <property type="entry name" value="UBIQUITIN-PROTEIN LIGASE E3C"/>
    <property type="match status" value="1"/>
</dbReference>
<dbReference type="PANTHER" id="PTHR45700:SF2">
    <property type="entry name" value="UBIQUITIN-PROTEIN LIGASE E3C"/>
    <property type="match status" value="1"/>
</dbReference>
<dbReference type="Pfam" id="PF00632">
    <property type="entry name" value="HECT"/>
    <property type="match status" value="1"/>
</dbReference>
<dbReference type="SMART" id="SM00119">
    <property type="entry name" value="HECTc"/>
    <property type="match status" value="1"/>
</dbReference>
<dbReference type="SMART" id="SM00015">
    <property type="entry name" value="IQ"/>
    <property type="match status" value="1"/>
</dbReference>
<dbReference type="SUPFAM" id="SSF56204">
    <property type="entry name" value="Hect, E3 ligase catalytic domain"/>
    <property type="match status" value="1"/>
</dbReference>
<dbReference type="PROSITE" id="PS50237">
    <property type="entry name" value="HECT"/>
    <property type="match status" value="1"/>
</dbReference>
<dbReference type="PROSITE" id="PS50096">
    <property type="entry name" value="IQ"/>
    <property type="match status" value="1"/>
</dbReference>
<keyword id="KW-1017">Isopeptide bond</keyword>
<keyword id="KW-1185">Reference proteome</keyword>
<keyword id="KW-0808">Transferase</keyword>
<keyword id="KW-0832">Ubl conjugation</keyword>
<keyword id="KW-0833">Ubl conjugation pathway</keyword>
<feature type="chain" id="PRO_0000194983" description="Ubiquitin-protein ligase E3C">
    <location>
        <begin position="1"/>
        <end position="1083"/>
    </location>
</feature>
<feature type="domain" description="IQ" evidence="3">
    <location>
        <begin position="45"/>
        <end position="74"/>
    </location>
</feature>
<feature type="domain" description="HECT" evidence="2">
    <location>
        <begin position="744"/>
        <end position="1083"/>
    </location>
</feature>
<feature type="region of interest" description="Cis-determinant of acceptor ubiquitin-binding" evidence="1">
    <location>
        <begin position="1"/>
        <end position="60"/>
    </location>
</feature>
<feature type="region of interest" description="Disordered" evidence="4">
    <location>
        <begin position="1"/>
        <end position="40"/>
    </location>
</feature>
<feature type="region of interest" description="Disordered" evidence="4">
    <location>
        <begin position="354"/>
        <end position="386"/>
    </location>
</feature>
<feature type="compositionally biased region" description="Basic and acidic residues" evidence="4">
    <location>
        <begin position="1"/>
        <end position="10"/>
    </location>
</feature>
<feature type="compositionally biased region" description="Basic and acidic residues" evidence="4">
    <location>
        <begin position="20"/>
        <end position="40"/>
    </location>
</feature>
<feature type="compositionally biased region" description="Acidic residues" evidence="4">
    <location>
        <begin position="366"/>
        <end position="376"/>
    </location>
</feature>
<feature type="active site" description="Glycyl thioester intermediate" evidence="2">
    <location>
        <position position="1051"/>
    </location>
</feature>
<feature type="cross-link" description="Glycyl lysine isopeptide (Lys-Gly) (interchain with G-Cter in ubiquitin); by autocatalysis" evidence="1">
    <location>
        <position position="903"/>
    </location>
</feature>
<feature type="sequence conflict" description="In Ref. 2; BAC26709." evidence="8" ref="2">
    <original>E</original>
    <variation>G</variation>
    <location>
        <position position="570"/>
    </location>
</feature>
<name>UBE3C_MOUSE</name>
<organism>
    <name type="scientific">Mus musculus</name>
    <name type="common">Mouse</name>
    <dbReference type="NCBI Taxonomy" id="10090"/>
    <lineage>
        <taxon>Eukaryota</taxon>
        <taxon>Metazoa</taxon>
        <taxon>Chordata</taxon>
        <taxon>Craniata</taxon>
        <taxon>Vertebrata</taxon>
        <taxon>Euteleostomi</taxon>
        <taxon>Mammalia</taxon>
        <taxon>Eutheria</taxon>
        <taxon>Euarchontoglires</taxon>
        <taxon>Glires</taxon>
        <taxon>Rodentia</taxon>
        <taxon>Myomorpha</taxon>
        <taxon>Muroidea</taxon>
        <taxon>Muridae</taxon>
        <taxon>Murinae</taxon>
        <taxon>Mus</taxon>
        <taxon>Mus</taxon>
    </lineage>
</organism>
<proteinExistence type="evidence at protein level"/>
<accession>Q80U95</accession>
<accession>Q0VB95</accession>
<accession>Q8BQZ6</accession>
<accession>Q8C7W6</accession>
<accession>Q8CDJ1</accession>
<accession>Q8VDL5</accession>
<gene>
    <name evidence="9" type="primary">Ube3c</name>
    <name evidence="6" type="synonym">Kiaa0010</name>
    <name evidence="1" type="synonym">Kiaa10</name>
</gene>